<evidence type="ECO:0000255" key="1">
    <source>
        <dbReference type="HAMAP-Rule" id="MF_00101"/>
    </source>
</evidence>
<keyword id="KW-0963">Cytoplasm</keyword>
<keyword id="KW-0275">Fatty acid biosynthesis</keyword>
<keyword id="KW-0276">Fatty acid metabolism</keyword>
<keyword id="KW-0444">Lipid biosynthesis</keyword>
<keyword id="KW-0443">Lipid metabolism</keyword>
<keyword id="KW-0460">Magnesium</keyword>
<keyword id="KW-0479">Metal-binding</keyword>
<keyword id="KW-1185">Reference proteome</keyword>
<keyword id="KW-0808">Transferase</keyword>
<sequence length="154" mass="16634">MIVGIGTDIVQVSRMTALLGRYGERFPRRILTGDEFKKFSVSKQPAYFLAKRFAAKEAAAKALGTGFGSGLRPCHIGVGHTERGQPFLEWQGRANELVRILGVSRGLLSLADEKEYALAFVTLLAEREGAKPGLSLERALNSLKLSGNGNGVTD</sequence>
<feature type="chain" id="PRO_0000228294" description="Holo-[acyl-carrier-protein] synthase">
    <location>
        <begin position="1"/>
        <end position="154"/>
    </location>
</feature>
<feature type="binding site" evidence="1">
    <location>
        <position position="8"/>
    </location>
    <ligand>
        <name>Mg(2+)</name>
        <dbReference type="ChEBI" id="CHEBI:18420"/>
    </ligand>
</feature>
<feature type="binding site" evidence="1">
    <location>
        <position position="57"/>
    </location>
    <ligand>
        <name>Mg(2+)</name>
        <dbReference type="ChEBI" id="CHEBI:18420"/>
    </ligand>
</feature>
<protein>
    <recommendedName>
        <fullName evidence="1">Holo-[acyl-carrier-protein] synthase</fullName>
        <shortName evidence="1">Holo-ACP synthase</shortName>
        <ecNumber evidence="1">2.7.8.7</ecNumber>
    </recommendedName>
    <alternativeName>
        <fullName evidence="1">4'-phosphopantetheinyl transferase AcpS</fullName>
    </alternativeName>
</protein>
<proteinExistence type="inferred from homology"/>
<accession>Q3JCY7</accession>
<name>ACPS_NITOC</name>
<gene>
    <name evidence="1" type="primary">acpS</name>
    <name type="ordered locus">Noc_0796</name>
</gene>
<dbReference type="EC" id="2.7.8.7" evidence="1"/>
<dbReference type="EMBL" id="CP000127">
    <property type="protein sequence ID" value="ABA57309.1"/>
    <property type="molecule type" value="Genomic_DNA"/>
</dbReference>
<dbReference type="RefSeq" id="WP_002809960.1">
    <property type="nucleotide sequence ID" value="NC_007484.1"/>
</dbReference>
<dbReference type="SMR" id="Q3JCY7"/>
<dbReference type="FunCoup" id="Q3JCY7">
    <property type="interactions" value="144"/>
</dbReference>
<dbReference type="STRING" id="323261.Noc_0796"/>
<dbReference type="KEGG" id="noc:Noc_0796"/>
<dbReference type="eggNOG" id="COG0736">
    <property type="taxonomic scope" value="Bacteria"/>
</dbReference>
<dbReference type="HOGENOM" id="CLU_089696_0_2_6"/>
<dbReference type="InParanoid" id="Q3JCY7"/>
<dbReference type="Proteomes" id="UP000006838">
    <property type="component" value="Chromosome"/>
</dbReference>
<dbReference type="GO" id="GO:0005737">
    <property type="term" value="C:cytoplasm"/>
    <property type="evidence" value="ECO:0007669"/>
    <property type="project" value="UniProtKB-SubCell"/>
</dbReference>
<dbReference type="GO" id="GO:0008897">
    <property type="term" value="F:holo-[acyl-carrier-protein] synthase activity"/>
    <property type="evidence" value="ECO:0007669"/>
    <property type="project" value="UniProtKB-UniRule"/>
</dbReference>
<dbReference type="GO" id="GO:0000287">
    <property type="term" value="F:magnesium ion binding"/>
    <property type="evidence" value="ECO:0007669"/>
    <property type="project" value="UniProtKB-UniRule"/>
</dbReference>
<dbReference type="GO" id="GO:0006633">
    <property type="term" value="P:fatty acid biosynthetic process"/>
    <property type="evidence" value="ECO:0007669"/>
    <property type="project" value="UniProtKB-UniRule"/>
</dbReference>
<dbReference type="Gene3D" id="3.90.470.20">
    <property type="entry name" value="4'-phosphopantetheinyl transferase domain"/>
    <property type="match status" value="1"/>
</dbReference>
<dbReference type="HAMAP" id="MF_00101">
    <property type="entry name" value="AcpS"/>
    <property type="match status" value="1"/>
</dbReference>
<dbReference type="InterPro" id="IPR008278">
    <property type="entry name" value="4-PPantetheinyl_Trfase_dom"/>
</dbReference>
<dbReference type="InterPro" id="IPR037143">
    <property type="entry name" value="4-PPantetheinyl_Trfase_dom_sf"/>
</dbReference>
<dbReference type="InterPro" id="IPR002582">
    <property type="entry name" value="ACPS"/>
</dbReference>
<dbReference type="InterPro" id="IPR004568">
    <property type="entry name" value="Ppantetheine-prot_Trfase_dom"/>
</dbReference>
<dbReference type="NCBIfam" id="TIGR00516">
    <property type="entry name" value="acpS"/>
    <property type="match status" value="1"/>
</dbReference>
<dbReference type="NCBIfam" id="TIGR00556">
    <property type="entry name" value="pantethn_trn"/>
    <property type="match status" value="1"/>
</dbReference>
<dbReference type="Pfam" id="PF01648">
    <property type="entry name" value="ACPS"/>
    <property type="match status" value="1"/>
</dbReference>
<dbReference type="SUPFAM" id="SSF56214">
    <property type="entry name" value="4'-phosphopantetheinyl transferase"/>
    <property type="match status" value="1"/>
</dbReference>
<organism>
    <name type="scientific">Nitrosococcus oceani (strain ATCC 19707 / BCRC 17464 / JCM 30415 / NCIMB 11848 / C-107)</name>
    <dbReference type="NCBI Taxonomy" id="323261"/>
    <lineage>
        <taxon>Bacteria</taxon>
        <taxon>Pseudomonadati</taxon>
        <taxon>Pseudomonadota</taxon>
        <taxon>Gammaproteobacteria</taxon>
        <taxon>Chromatiales</taxon>
        <taxon>Chromatiaceae</taxon>
        <taxon>Nitrosococcus</taxon>
    </lineage>
</organism>
<comment type="function">
    <text evidence="1">Transfers the 4'-phosphopantetheine moiety from coenzyme A to a Ser of acyl-carrier-protein.</text>
</comment>
<comment type="catalytic activity">
    <reaction evidence="1">
        <text>apo-[ACP] + CoA = holo-[ACP] + adenosine 3',5'-bisphosphate + H(+)</text>
        <dbReference type="Rhea" id="RHEA:12068"/>
        <dbReference type="Rhea" id="RHEA-COMP:9685"/>
        <dbReference type="Rhea" id="RHEA-COMP:9690"/>
        <dbReference type="ChEBI" id="CHEBI:15378"/>
        <dbReference type="ChEBI" id="CHEBI:29999"/>
        <dbReference type="ChEBI" id="CHEBI:57287"/>
        <dbReference type="ChEBI" id="CHEBI:58343"/>
        <dbReference type="ChEBI" id="CHEBI:64479"/>
        <dbReference type="EC" id="2.7.8.7"/>
    </reaction>
</comment>
<comment type="cofactor">
    <cofactor evidence="1">
        <name>Mg(2+)</name>
        <dbReference type="ChEBI" id="CHEBI:18420"/>
    </cofactor>
</comment>
<comment type="subcellular location">
    <subcellularLocation>
        <location evidence="1">Cytoplasm</location>
    </subcellularLocation>
</comment>
<comment type="similarity">
    <text evidence="1">Belongs to the P-Pant transferase superfamily. AcpS family.</text>
</comment>
<reference key="1">
    <citation type="journal article" date="2006" name="Appl. Environ. Microbiol.">
        <title>Complete genome sequence of the marine, chemolithoautotrophic, ammonia-oxidizing bacterium Nitrosococcus oceani ATCC 19707.</title>
        <authorList>
            <person name="Klotz M.G."/>
            <person name="Arp D.J."/>
            <person name="Chain P.S.G."/>
            <person name="El-Sheikh A.F."/>
            <person name="Hauser L.J."/>
            <person name="Hommes N.G."/>
            <person name="Larimer F.W."/>
            <person name="Malfatti S.A."/>
            <person name="Norton J.M."/>
            <person name="Poret-Peterson A.T."/>
            <person name="Vergez L.M."/>
            <person name="Ward B.B."/>
        </authorList>
    </citation>
    <scope>NUCLEOTIDE SEQUENCE [LARGE SCALE GENOMIC DNA]</scope>
    <source>
        <strain>ATCC 19707 / BCRC 17464 / JCM 30415 / NCIMB 11848 / C-107</strain>
    </source>
</reference>